<keyword id="KW-1003">Cell membrane</keyword>
<keyword id="KW-1015">Disulfide bond</keyword>
<keyword id="KW-0325">Glycoprotein</keyword>
<keyword id="KW-0407">Ion channel</keyword>
<keyword id="KW-0406">Ion transport</keyword>
<keyword id="KW-1071">Ligand-gated ion channel</keyword>
<keyword id="KW-0472">Membrane</keyword>
<keyword id="KW-0628">Postsynaptic cell membrane</keyword>
<keyword id="KW-0675">Receptor</keyword>
<keyword id="KW-1185">Reference proteome</keyword>
<keyword id="KW-0732">Signal</keyword>
<keyword id="KW-0770">Synapse</keyword>
<keyword id="KW-0812">Transmembrane</keyword>
<keyword id="KW-1133">Transmembrane helix</keyword>
<keyword id="KW-0813">Transport</keyword>
<protein>
    <recommendedName>
        <fullName evidence="4">5-hydroxytryptamine receptor 3B</fullName>
        <shortName>5-HT3-B</shortName>
        <shortName>5-HT3B</shortName>
    </recommendedName>
    <alternativeName>
        <fullName>Serotonin receptor 3B</fullName>
    </alternativeName>
</protein>
<gene>
    <name evidence="5" type="primary">Htr3b</name>
</gene>
<dbReference type="EMBL" id="AF155045">
    <property type="protein sequence ID" value="AAF73284.1"/>
    <property type="molecule type" value="mRNA"/>
</dbReference>
<dbReference type="EMBL" id="AF155052">
    <property type="protein sequence ID" value="AAF73285.1"/>
    <property type="molecule type" value="Genomic_DNA"/>
</dbReference>
<dbReference type="EMBL" id="AF155046">
    <property type="protein sequence ID" value="AAF73285.1"/>
    <property type="status" value="JOINED"/>
    <property type="molecule type" value="Genomic_DNA"/>
</dbReference>
<dbReference type="EMBL" id="AF155047">
    <property type="protein sequence ID" value="AAF73285.1"/>
    <property type="status" value="JOINED"/>
    <property type="molecule type" value="Genomic_DNA"/>
</dbReference>
<dbReference type="EMBL" id="AF155048">
    <property type="protein sequence ID" value="AAF73285.1"/>
    <property type="status" value="JOINED"/>
    <property type="molecule type" value="Genomic_DNA"/>
</dbReference>
<dbReference type="EMBL" id="AF155049">
    <property type="protein sequence ID" value="AAF73285.1"/>
    <property type="status" value="JOINED"/>
    <property type="molecule type" value="Genomic_DNA"/>
</dbReference>
<dbReference type="EMBL" id="AF155050">
    <property type="protein sequence ID" value="AAF73285.1"/>
    <property type="status" value="JOINED"/>
    <property type="molecule type" value="Genomic_DNA"/>
</dbReference>
<dbReference type="EMBL" id="AF155051">
    <property type="protein sequence ID" value="AAF73285.1"/>
    <property type="status" value="JOINED"/>
    <property type="molecule type" value="Genomic_DNA"/>
</dbReference>
<dbReference type="EMBL" id="AK085213">
    <property type="protein sequence ID" value="BAC39391.1"/>
    <property type="molecule type" value="mRNA"/>
</dbReference>
<dbReference type="EMBL" id="BC046990">
    <property type="protein sequence ID" value="AAH46990.1"/>
    <property type="molecule type" value="mRNA"/>
</dbReference>
<dbReference type="CCDS" id="CCDS23160.1"/>
<dbReference type="RefSeq" id="NP_064670.1">
    <property type="nucleotide sequence ID" value="NM_020274.4"/>
</dbReference>
<dbReference type="SMR" id="Q9JHJ5"/>
<dbReference type="BioGRID" id="208209">
    <property type="interactions" value="1"/>
</dbReference>
<dbReference type="ComplexPortal" id="CPX-275">
    <property type="entry name" value="5-hydroxytryptamine-3A/B receptor complex"/>
</dbReference>
<dbReference type="FunCoup" id="Q9JHJ5">
    <property type="interactions" value="174"/>
</dbReference>
<dbReference type="IntAct" id="Q9JHJ5">
    <property type="interactions" value="1"/>
</dbReference>
<dbReference type="STRING" id="10090.ENSMUSP00000008734"/>
<dbReference type="BindingDB" id="Q9JHJ5"/>
<dbReference type="ChEMBL" id="CHEMBL3781"/>
<dbReference type="DrugCentral" id="Q9JHJ5"/>
<dbReference type="GuidetoPHARMACOLOGY" id="374"/>
<dbReference type="GlyCosmos" id="Q9JHJ5">
    <property type="glycosylation" value="4 sites, No reported glycans"/>
</dbReference>
<dbReference type="GlyGen" id="Q9JHJ5">
    <property type="glycosylation" value="4 sites"/>
</dbReference>
<dbReference type="iPTMnet" id="Q9JHJ5"/>
<dbReference type="PhosphoSitePlus" id="Q9JHJ5"/>
<dbReference type="PaxDb" id="10090-ENSMUSP00000008734"/>
<dbReference type="ProteomicsDB" id="296451"/>
<dbReference type="Antibodypedia" id="18362">
    <property type="antibodies" value="170 antibodies from 29 providers"/>
</dbReference>
<dbReference type="DNASU" id="57014"/>
<dbReference type="Ensembl" id="ENSMUST00000008734.5">
    <property type="protein sequence ID" value="ENSMUSP00000008734.5"/>
    <property type="gene ID" value="ENSMUSG00000008590.5"/>
</dbReference>
<dbReference type="GeneID" id="57014"/>
<dbReference type="KEGG" id="mmu:57014"/>
<dbReference type="UCSC" id="uc012gsr.1">
    <property type="organism name" value="mouse"/>
</dbReference>
<dbReference type="AGR" id="MGI:1861899"/>
<dbReference type="CTD" id="9177"/>
<dbReference type="MGI" id="MGI:1861899">
    <property type="gene designation" value="Htr3b"/>
</dbReference>
<dbReference type="VEuPathDB" id="HostDB:ENSMUSG00000008590"/>
<dbReference type="eggNOG" id="KOG3645">
    <property type="taxonomic scope" value="Eukaryota"/>
</dbReference>
<dbReference type="GeneTree" id="ENSGT00940000158478"/>
<dbReference type="HOGENOM" id="CLU_018074_5_0_1"/>
<dbReference type="InParanoid" id="Q9JHJ5"/>
<dbReference type="OMA" id="NMANEVP"/>
<dbReference type="OrthoDB" id="5975154at2759"/>
<dbReference type="PhylomeDB" id="Q9JHJ5"/>
<dbReference type="TreeFam" id="TF315605"/>
<dbReference type="Reactome" id="R-MMU-112314">
    <property type="pathway name" value="Neurotransmitter receptors and postsynaptic signal transmission"/>
</dbReference>
<dbReference type="BioGRID-ORCS" id="57014">
    <property type="hits" value="3 hits in 78 CRISPR screens"/>
</dbReference>
<dbReference type="ChiTaRS" id="Htr3b">
    <property type="organism name" value="mouse"/>
</dbReference>
<dbReference type="PRO" id="PR:Q9JHJ5"/>
<dbReference type="Proteomes" id="UP000000589">
    <property type="component" value="Chromosome 9"/>
</dbReference>
<dbReference type="RNAct" id="Q9JHJ5">
    <property type="molecule type" value="protein"/>
</dbReference>
<dbReference type="Bgee" id="ENSMUSG00000008590">
    <property type="expression patterns" value="Expressed in lumbar dorsal root ganglion and 17 other cell types or tissues"/>
</dbReference>
<dbReference type="GO" id="GO:0009986">
    <property type="term" value="C:cell surface"/>
    <property type="evidence" value="ECO:0007669"/>
    <property type="project" value="Ensembl"/>
</dbReference>
<dbReference type="GO" id="GO:0005886">
    <property type="term" value="C:plasma membrane"/>
    <property type="evidence" value="ECO:0000314"/>
    <property type="project" value="MGI"/>
</dbReference>
<dbReference type="GO" id="GO:0045211">
    <property type="term" value="C:postsynaptic membrane"/>
    <property type="evidence" value="ECO:0007669"/>
    <property type="project" value="UniProtKB-SubCell"/>
</dbReference>
<dbReference type="GO" id="GO:1904602">
    <property type="term" value="C:serotonin-activated cation-selective channel complex"/>
    <property type="evidence" value="ECO:0000266"/>
    <property type="project" value="ComplexPortal"/>
</dbReference>
<dbReference type="GO" id="GO:0022850">
    <property type="term" value="F:serotonin-gated monoatomic cation channel activity"/>
    <property type="evidence" value="ECO:0000314"/>
    <property type="project" value="MGI"/>
</dbReference>
<dbReference type="GO" id="GO:0098662">
    <property type="term" value="P:inorganic cation transmembrane transport"/>
    <property type="evidence" value="ECO:0000266"/>
    <property type="project" value="ComplexPortal"/>
</dbReference>
<dbReference type="GO" id="GO:0007210">
    <property type="term" value="P:serotonin receptor signaling pathway"/>
    <property type="evidence" value="ECO:0000266"/>
    <property type="project" value="ComplexPortal"/>
</dbReference>
<dbReference type="GO" id="GO:0140227">
    <property type="term" value="P:serotonin-gated cation-selective signaling pathway"/>
    <property type="evidence" value="ECO:0007669"/>
    <property type="project" value="Ensembl"/>
</dbReference>
<dbReference type="CDD" id="cd19063">
    <property type="entry name" value="LGIC_TM_5-HT3"/>
    <property type="match status" value="1"/>
</dbReference>
<dbReference type="FunFam" id="2.70.170.10:FF:000017">
    <property type="entry name" value="5-hydroxytryptamine receptor 3A"/>
    <property type="match status" value="1"/>
</dbReference>
<dbReference type="FunFam" id="1.20.58.390:FF:000056">
    <property type="entry name" value="5-hydroxytryptamine receptor 3B"/>
    <property type="match status" value="1"/>
</dbReference>
<dbReference type="Gene3D" id="2.70.170.10">
    <property type="entry name" value="Neurotransmitter-gated ion-channel ligand-binding domain"/>
    <property type="match status" value="1"/>
</dbReference>
<dbReference type="Gene3D" id="1.20.58.390">
    <property type="entry name" value="Neurotransmitter-gated ion-channel transmembrane domain"/>
    <property type="match status" value="1"/>
</dbReference>
<dbReference type="InterPro" id="IPR008132">
    <property type="entry name" value="5HT3_rcpt"/>
</dbReference>
<dbReference type="InterPro" id="IPR008134">
    <property type="entry name" value="5HT3_rcpt_B"/>
</dbReference>
<dbReference type="InterPro" id="IPR049944">
    <property type="entry name" value="LGIC_TM_5-HT3"/>
</dbReference>
<dbReference type="InterPro" id="IPR006202">
    <property type="entry name" value="Neur_chan_lig-bd"/>
</dbReference>
<dbReference type="InterPro" id="IPR036734">
    <property type="entry name" value="Neur_chan_lig-bd_sf"/>
</dbReference>
<dbReference type="InterPro" id="IPR006201">
    <property type="entry name" value="Neur_channel"/>
</dbReference>
<dbReference type="InterPro" id="IPR036719">
    <property type="entry name" value="Neuro-gated_channel_TM_sf"/>
</dbReference>
<dbReference type="InterPro" id="IPR038050">
    <property type="entry name" value="Neuro_actylchol_rec"/>
</dbReference>
<dbReference type="InterPro" id="IPR006029">
    <property type="entry name" value="Neurotrans-gated_channel_TM"/>
</dbReference>
<dbReference type="NCBIfam" id="TIGR00860">
    <property type="entry name" value="LIC"/>
    <property type="match status" value="1"/>
</dbReference>
<dbReference type="PANTHER" id="PTHR18945">
    <property type="entry name" value="NEUROTRANSMITTER GATED ION CHANNEL"/>
    <property type="match status" value="1"/>
</dbReference>
<dbReference type="Pfam" id="PF02931">
    <property type="entry name" value="Neur_chan_LBD"/>
    <property type="match status" value="1"/>
</dbReference>
<dbReference type="Pfam" id="PF02932">
    <property type="entry name" value="Neur_chan_memb"/>
    <property type="match status" value="1"/>
</dbReference>
<dbReference type="PRINTS" id="PR01710">
    <property type="entry name" value="5HT3BRECEPTR"/>
</dbReference>
<dbReference type="PRINTS" id="PR01708">
    <property type="entry name" value="5HT3RECEPTOR"/>
</dbReference>
<dbReference type="PRINTS" id="PR00252">
    <property type="entry name" value="NRIONCHANNEL"/>
</dbReference>
<dbReference type="SUPFAM" id="SSF90112">
    <property type="entry name" value="Neurotransmitter-gated ion-channel transmembrane pore"/>
    <property type="match status" value="1"/>
</dbReference>
<dbReference type="SUPFAM" id="SSF63712">
    <property type="entry name" value="Nicotinic receptor ligand binding domain-like"/>
    <property type="match status" value="1"/>
</dbReference>
<evidence type="ECO:0000250" key="1">
    <source>
        <dbReference type="UniProtKB" id="O95264"/>
    </source>
</evidence>
<evidence type="ECO:0000250" key="2">
    <source>
        <dbReference type="UniProtKB" id="P23979"/>
    </source>
</evidence>
<evidence type="ECO:0000255" key="3"/>
<evidence type="ECO:0000305" key="4"/>
<evidence type="ECO:0000312" key="5">
    <source>
        <dbReference type="MGI" id="MGI:1861899"/>
    </source>
</evidence>
<accession>Q9JHJ5</accession>
<proteinExistence type="evidence at transcript level"/>
<sequence length="437" mass="50321">MILLWSCLLVAVVGILGTATPQPGNSSLHRLTRQLLQQYHKEVRPVYNWAEATTVYLDLCVHAVLDVDVQNQKLKTSVWYREVWNDEFLSWNSSLFDEIQEISLPLSALWAPDIIINEFVDVERSPDLPYVYVNSSGTIRNHKPIQVVSACSLQTYAFPFDIQNCSLTFNSILHTVEDIDLGFLRNREDIENDKRAFMNDSEWQLLSVSSTYHIRQSSAGDFAQIRFNVVIRRCPLAYVVSLLIPSIFLMLVDLGSFYLPPNCRARIVFKTNVLVGYTVFRVNMSDEVPRSAGCTPLIGVFFTVCMALLVLSLSKSILLIKFLYEERHSGQERPLMCLQGDSDAEESRLYLGAPRADVTESPVHQEHRVPSDTLKDFWFQFRSINNSLRTRDQIHQKEVEWLAILYRFDQLLFRIYLAVLGLYTVTLCSLWALWSRM</sequence>
<name>5HT3B_MOUSE</name>
<organism>
    <name type="scientific">Mus musculus</name>
    <name type="common">Mouse</name>
    <dbReference type="NCBI Taxonomy" id="10090"/>
    <lineage>
        <taxon>Eukaryota</taxon>
        <taxon>Metazoa</taxon>
        <taxon>Chordata</taxon>
        <taxon>Craniata</taxon>
        <taxon>Vertebrata</taxon>
        <taxon>Euteleostomi</taxon>
        <taxon>Mammalia</taxon>
        <taxon>Eutheria</taxon>
        <taxon>Euarchontoglires</taxon>
        <taxon>Glires</taxon>
        <taxon>Rodentia</taxon>
        <taxon>Myomorpha</taxon>
        <taxon>Muroidea</taxon>
        <taxon>Muridae</taxon>
        <taxon>Murinae</taxon>
        <taxon>Mus</taxon>
        <taxon>Mus</taxon>
    </lineage>
</organism>
<reference key="1">
    <citation type="journal article" date="2000" name="J. Neurochem.">
        <title>Evidence for expression of heteromeric serotonin 5-HT(3) receptors in rodents.</title>
        <authorList>
            <person name="Hanna M.C."/>
            <person name="Davies P.A."/>
            <person name="Hales T.G."/>
            <person name="Kirkness E.F."/>
        </authorList>
    </citation>
    <scope>NUCLEOTIDE SEQUENCE [GENOMIC DNA / MRNA]</scope>
    <source>
        <strain>129/SvJ</strain>
        <strain>BALB/cJ</strain>
    </source>
</reference>
<reference key="2">
    <citation type="journal article" date="2005" name="Science">
        <title>The transcriptional landscape of the mammalian genome.</title>
        <authorList>
            <person name="Carninci P."/>
            <person name="Kasukawa T."/>
            <person name="Katayama S."/>
            <person name="Gough J."/>
            <person name="Frith M.C."/>
            <person name="Maeda N."/>
            <person name="Oyama R."/>
            <person name="Ravasi T."/>
            <person name="Lenhard B."/>
            <person name="Wells C."/>
            <person name="Kodzius R."/>
            <person name="Shimokawa K."/>
            <person name="Bajic V.B."/>
            <person name="Brenner S.E."/>
            <person name="Batalov S."/>
            <person name="Forrest A.R."/>
            <person name="Zavolan M."/>
            <person name="Davis M.J."/>
            <person name="Wilming L.G."/>
            <person name="Aidinis V."/>
            <person name="Allen J.E."/>
            <person name="Ambesi-Impiombato A."/>
            <person name="Apweiler R."/>
            <person name="Aturaliya R.N."/>
            <person name="Bailey T.L."/>
            <person name="Bansal M."/>
            <person name="Baxter L."/>
            <person name="Beisel K.W."/>
            <person name="Bersano T."/>
            <person name="Bono H."/>
            <person name="Chalk A.M."/>
            <person name="Chiu K.P."/>
            <person name="Choudhary V."/>
            <person name="Christoffels A."/>
            <person name="Clutterbuck D.R."/>
            <person name="Crowe M.L."/>
            <person name="Dalla E."/>
            <person name="Dalrymple B.P."/>
            <person name="de Bono B."/>
            <person name="Della Gatta G."/>
            <person name="di Bernardo D."/>
            <person name="Down T."/>
            <person name="Engstrom P."/>
            <person name="Fagiolini M."/>
            <person name="Faulkner G."/>
            <person name="Fletcher C.F."/>
            <person name="Fukushima T."/>
            <person name="Furuno M."/>
            <person name="Futaki S."/>
            <person name="Gariboldi M."/>
            <person name="Georgii-Hemming P."/>
            <person name="Gingeras T.R."/>
            <person name="Gojobori T."/>
            <person name="Green R.E."/>
            <person name="Gustincich S."/>
            <person name="Harbers M."/>
            <person name="Hayashi Y."/>
            <person name="Hensch T.K."/>
            <person name="Hirokawa N."/>
            <person name="Hill D."/>
            <person name="Huminiecki L."/>
            <person name="Iacono M."/>
            <person name="Ikeo K."/>
            <person name="Iwama A."/>
            <person name="Ishikawa T."/>
            <person name="Jakt M."/>
            <person name="Kanapin A."/>
            <person name="Katoh M."/>
            <person name="Kawasawa Y."/>
            <person name="Kelso J."/>
            <person name="Kitamura H."/>
            <person name="Kitano H."/>
            <person name="Kollias G."/>
            <person name="Krishnan S.P."/>
            <person name="Kruger A."/>
            <person name="Kummerfeld S.K."/>
            <person name="Kurochkin I.V."/>
            <person name="Lareau L.F."/>
            <person name="Lazarevic D."/>
            <person name="Lipovich L."/>
            <person name="Liu J."/>
            <person name="Liuni S."/>
            <person name="McWilliam S."/>
            <person name="Madan Babu M."/>
            <person name="Madera M."/>
            <person name="Marchionni L."/>
            <person name="Matsuda H."/>
            <person name="Matsuzawa S."/>
            <person name="Miki H."/>
            <person name="Mignone F."/>
            <person name="Miyake S."/>
            <person name="Morris K."/>
            <person name="Mottagui-Tabar S."/>
            <person name="Mulder N."/>
            <person name="Nakano N."/>
            <person name="Nakauchi H."/>
            <person name="Ng P."/>
            <person name="Nilsson R."/>
            <person name="Nishiguchi S."/>
            <person name="Nishikawa S."/>
            <person name="Nori F."/>
            <person name="Ohara O."/>
            <person name="Okazaki Y."/>
            <person name="Orlando V."/>
            <person name="Pang K.C."/>
            <person name="Pavan W.J."/>
            <person name="Pavesi G."/>
            <person name="Pesole G."/>
            <person name="Petrovsky N."/>
            <person name="Piazza S."/>
            <person name="Reed J."/>
            <person name="Reid J.F."/>
            <person name="Ring B.Z."/>
            <person name="Ringwald M."/>
            <person name="Rost B."/>
            <person name="Ruan Y."/>
            <person name="Salzberg S.L."/>
            <person name="Sandelin A."/>
            <person name="Schneider C."/>
            <person name="Schoenbach C."/>
            <person name="Sekiguchi K."/>
            <person name="Semple C.A."/>
            <person name="Seno S."/>
            <person name="Sessa L."/>
            <person name="Sheng Y."/>
            <person name="Shibata Y."/>
            <person name="Shimada H."/>
            <person name="Shimada K."/>
            <person name="Silva D."/>
            <person name="Sinclair B."/>
            <person name="Sperling S."/>
            <person name="Stupka E."/>
            <person name="Sugiura K."/>
            <person name="Sultana R."/>
            <person name="Takenaka Y."/>
            <person name="Taki K."/>
            <person name="Tammoja K."/>
            <person name="Tan S.L."/>
            <person name="Tang S."/>
            <person name="Taylor M.S."/>
            <person name="Tegner J."/>
            <person name="Teichmann S.A."/>
            <person name="Ueda H.R."/>
            <person name="van Nimwegen E."/>
            <person name="Verardo R."/>
            <person name="Wei C.L."/>
            <person name="Yagi K."/>
            <person name="Yamanishi H."/>
            <person name="Zabarovsky E."/>
            <person name="Zhu S."/>
            <person name="Zimmer A."/>
            <person name="Hide W."/>
            <person name="Bult C."/>
            <person name="Grimmond S.M."/>
            <person name="Teasdale R.D."/>
            <person name="Liu E.T."/>
            <person name="Brusic V."/>
            <person name="Quackenbush J."/>
            <person name="Wahlestedt C."/>
            <person name="Mattick J.S."/>
            <person name="Hume D.A."/>
            <person name="Kai C."/>
            <person name="Sasaki D."/>
            <person name="Tomaru Y."/>
            <person name="Fukuda S."/>
            <person name="Kanamori-Katayama M."/>
            <person name="Suzuki M."/>
            <person name="Aoki J."/>
            <person name="Arakawa T."/>
            <person name="Iida J."/>
            <person name="Imamura K."/>
            <person name="Itoh M."/>
            <person name="Kato T."/>
            <person name="Kawaji H."/>
            <person name="Kawagashira N."/>
            <person name="Kawashima T."/>
            <person name="Kojima M."/>
            <person name="Kondo S."/>
            <person name="Konno H."/>
            <person name="Nakano K."/>
            <person name="Ninomiya N."/>
            <person name="Nishio T."/>
            <person name="Okada M."/>
            <person name="Plessy C."/>
            <person name="Shibata K."/>
            <person name="Shiraki T."/>
            <person name="Suzuki S."/>
            <person name="Tagami M."/>
            <person name="Waki K."/>
            <person name="Watahiki A."/>
            <person name="Okamura-Oho Y."/>
            <person name="Suzuki H."/>
            <person name="Kawai J."/>
            <person name="Hayashizaki Y."/>
        </authorList>
    </citation>
    <scope>NUCLEOTIDE SEQUENCE [LARGE SCALE MRNA]</scope>
    <source>
        <strain>C57BL/6J</strain>
        <tissue>Stomach</tissue>
    </source>
</reference>
<reference key="3">
    <citation type="journal article" date="2004" name="Genome Res.">
        <title>The status, quality, and expansion of the NIH full-length cDNA project: the Mammalian Gene Collection (MGC).</title>
        <authorList>
            <consortium name="The MGC Project Team"/>
        </authorList>
    </citation>
    <scope>NUCLEOTIDE SEQUENCE [LARGE SCALE MRNA]</scope>
    <source>
        <tissue>Olfactory epithelium</tissue>
    </source>
</reference>
<comment type="function">
    <text evidence="1">Forms serotonin (5-hydroxytryptamine/5-HT3)-activated cation-selective channel complexes, which when activated cause fast, depolarizing responses in neurons.</text>
</comment>
<comment type="catalytic activity">
    <reaction evidence="1">
        <text>Na(+)(in) = Na(+)(out)</text>
        <dbReference type="Rhea" id="RHEA:34963"/>
        <dbReference type="ChEBI" id="CHEBI:29101"/>
    </reaction>
</comment>
<comment type="catalytic activity">
    <reaction evidence="1">
        <text>K(+)(in) = K(+)(out)</text>
        <dbReference type="Rhea" id="RHEA:29463"/>
        <dbReference type="ChEBI" id="CHEBI:29103"/>
    </reaction>
</comment>
<comment type="catalytic activity">
    <reaction evidence="1">
        <text>Ca(2+)(in) = Ca(2+)(out)</text>
        <dbReference type="Rhea" id="RHEA:29671"/>
        <dbReference type="ChEBI" id="CHEBI:29108"/>
    </reaction>
</comment>
<comment type="subunit">
    <text evidence="1">Forms homopentameric as well as heteropentameric serotonin-activated cation-selective channel complexes with HTR3A. The homomeric complex is not functional. Heteropentameric complexes display properties which resemble that of neuronal serotonin-activated channels in vivo.</text>
</comment>
<comment type="subcellular location">
    <subcellularLocation>
        <location evidence="1">Postsynaptic cell membrane</location>
        <topology evidence="3">Multi-pass membrane protein</topology>
    </subcellularLocation>
    <subcellularLocation>
        <location evidence="1">Cell membrane</location>
        <topology evidence="3">Multi-pass membrane protein</topology>
    </subcellularLocation>
    <text evidence="1">Presumably retained within the endoplasmic reticulum unless complexed with HTR3A.</text>
</comment>
<comment type="domain">
    <text evidence="1">The HA-stretch region of HTR3B seems to confer increased conductance to HTR3A/HTR3B heteromers compared to that of HTR3A homomers.</text>
</comment>
<comment type="PTM">
    <text evidence="1">N-glycosylation is required for membrane localization.</text>
</comment>
<comment type="similarity">
    <text evidence="4">Belongs to the ligand-gated ion channel (TC 1.A.9) family. 5-hydroxytryptamine receptor (TC 1.A.9.2) subfamily. HTR3B sub-subfamily.</text>
</comment>
<feature type="signal peptide" evidence="3">
    <location>
        <begin position="1"/>
        <end position="21"/>
    </location>
</feature>
<feature type="chain" id="PRO_0000312290" description="5-hydroxytryptamine receptor 3B">
    <location>
        <begin position="22"/>
        <end position="437"/>
    </location>
</feature>
<feature type="topological domain" description="Extracellular" evidence="1">
    <location>
        <begin position="22"/>
        <end position="238"/>
    </location>
</feature>
<feature type="transmembrane region" description="Helical; Name=1" evidence="3">
    <location>
        <begin position="239"/>
        <end position="259"/>
    </location>
</feature>
<feature type="topological domain" description="Cytoplasmic" evidence="1">
    <location>
        <begin position="260"/>
        <end position="264"/>
    </location>
</feature>
<feature type="transmembrane region" description="Helical; Name=2" evidence="3">
    <location>
        <begin position="265"/>
        <end position="282"/>
    </location>
</feature>
<feature type="topological domain" description="Extracellular" evidence="1">
    <location>
        <begin position="283"/>
        <end position="292"/>
    </location>
</feature>
<feature type="transmembrane region" description="Helical; Name=3" evidence="3">
    <location>
        <begin position="293"/>
        <end position="313"/>
    </location>
</feature>
<feature type="topological domain" description="Cytoplasmic" evidence="1">
    <location>
        <begin position="314"/>
        <end position="410"/>
    </location>
</feature>
<feature type="transmembrane region" description="Helical; Name=4" evidence="3">
    <location>
        <begin position="411"/>
        <end position="431"/>
    </location>
</feature>
<feature type="topological domain" description="Extracellular" evidence="1">
    <location>
        <begin position="432"/>
        <end position="437"/>
    </location>
</feature>
<feature type="region of interest" description="HA-stretch; determines single-channel conductance in 5-HT3 receptors" evidence="1">
    <location>
        <begin position="377"/>
        <end position="409"/>
    </location>
</feature>
<feature type="glycosylation site" description="N-linked (GlcNAc...) asparagine" evidence="3">
    <location>
        <position position="25"/>
    </location>
</feature>
<feature type="glycosylation site" description="N-linked (GlcNAc...) asparagine" evidence="3">
    <location>
        <position position="92"/>
    </location>
</feature>
<feature type="glycosylation site" description="N-linked (GlcNAc...) asparagine" evidence="3">
    <location>
        <position position="134"/>
    </location>
</feature>
<feature type="glycosylation site" description="N-linked (GlcNAc...) asparagine" evidence="3">
    <location>
        <position position="283"/>
    </location>
</feature>
<feature type="disulfide bond" evidence="2">
    <location>
        <begin position="151"/>
        <end position="165"/>
    </location>
</feature>